<comment type="similarity">
    <text evidence="1">Belongs to the DsrB family.</text>
</comment>
<feature type="chain" id="PRO_0000300620" description="Protein DsrB">
    <location>
        <begin position="1"/>
        <end position="63"/>
    </location>
</feature>
<reference key="1">
    <citation type="journal article" date="2006" name="J. Bacteriol.">
        <title>Complete genome sequence of Yersinia pestis strains Antiqua and Nepal516: evidence of gene reduction in an emerging pathogen.</title>
        <authorList>
            <person name="Chain P.S.G."/>
            <person name="Hu P."/>
            <person name="Malfatti S.A."/>
            <person name="Radnedge L."/>
            <person name="Larimer F."/>
            <person name="Vergez L.M."/>
            <person name="Worsham P."/>
            <person name="Chu M.C."/>
            <person name="Andersen G.L."/>
        </authorList>
    </citation>
    <scope>NUCLEOTIDE SEQUENCE [LARGE SCALE GENOMIC DNA]</scope>
    <source>
        <strain>Antiqua</strain>
    </source>
</reference>
<proteinExistence type="inferred from homology"/>
<protein>
    <recommendedName>
        <fullName evidence="1">Protein DsrB</fullName>
    </recommendedName>
</protein>
<dbReference type="EMBL" id="CP000308">
    <property type="protein sequence ID" value="ABG13830.1"/>
    <property type="molecule type" value="Genomic_DNA"/>
</dbReference>
<dbReference type="RefSeq" id="WP_002210892.1">
    <property type="nucleotide sequence ID" value="NZ_CP009906.1"/>
</dbReference>
<dbReference type="SMR" id="Q1C6U2"/>
<dbReference type="GeneID" id="96666536"/>
<dbReference type="KEGG" id="ypa:YPA_1864"/>
<dbReference type="Proteomes" id="UP000001971">
    <property type="component" value="Chromosome"/>
</dbReference>
<dbReference type="HAMAP" id="MF_01549">
    <property type="entry name" value="DsrB"/>
    <property type="match status" value="1"/>
</dbReference>
<dbReference type="InterPro" id="IPR019717">
    <property type="entry name" value="Dextransucrase_DSRB"/>
</dbReference>
<dbReference type="NCBIfam" id="NF007981">
    <property type="entry name" value="PRK10708.1"/>
    <property type="match status" value="1"/>
</dbReference>
<dbReference type="Pfam" id="PF10781">
    <property type="entry name" value="DSRB"/>
    <property type="match status" value="1"/>
</dbReference>
<organism>
    <name type="scientific">Yersinia pestis bv. Antiqua (strain Antiqua)</name>
    <dbReference type="NCBI Taxonomy" id="360102"/>
    <lineage>
        <taxon>Bacteria</taxon>
        <taxon>Pseudomonadati</taxon>
        <taxon>Pseudomonadota</taxon>
        <taxon>Gammaproteobacteria</taxon>
        <taxon>Enterobacterales</taxon>
        <taxon>Yersiniaceae</taxon>
        <taxon>Yersinia</taxon>
    </lineage>
</organism>
<accession>Q1C6U2</accession>
<sequence length="63" mass="7041">MKVNDRVTVKTDGGPRREGVVLEVEEFSEGVMYLVSLADYPAGVWFFNEVDSQDGTFVEPLSQ</sequence>
<evidence type="ECO:0000255" key="1">
    <source>
        <dbReference type="HAMAP-Rule" id="MF_01549"/>
    </source>
</evidence>
<gene>
    <name evidence="1" type="primary">dsrB</name>
    <name type="ordered locus">YPA_1864</name>
</gene>
<name>DSRB_YERPA</name>